<keyword id="KW-0903">Direct protein sequencing</keyword>
<keyword id="KW-0256">Endoplasmic reticulum</keyword>
<keyword id="KW-0349">Heme</keyword>
<keyword id="KW-0408">Iron</keyword>
<keyword id="KW-0472">Membrane</keyword>
<keyword id="KW-0479">Metal-binding</keyword>
<keyword id="KW-0492">Microsome</keyword>
<keyword id="KW-0503">Monooxygenase</keyword>
<keyword id="KW-0560">Oxidoreductase</keyword>
<keyword id="KW-1185">Reference proteome</keyword>
<dbReference type="EC" id="1.14.14.1"/>
<dbReference type="EMBL" id="M10161">
    <property type="protein sequence ID" value="AAA41035.1"/>
    <property type="molecule type" value="mRNA"/>
</dbReference>
<dbReference type="EMBL" id="X64401">
    <property type="protein sequence ID" value="CAA45743.1"/>
    <property type="molecule type" value="mRNA"/>
</dbReference>
<dbReference type="EMBL" id="M86850">
    <property type="protein sequence ID" value="AAA41780.1"/>
    <property type="molecule type" value="Genomic_DNA"/>
</dbReference>
<dbReference type="EMBL" id="X62086">
    <property type="status" value="NOT_ANNOTATED_CDS"/>
    <property type="molecule type" value="Genomic_DNA"/>
</dbReference>
<dbReference type="PIR" id="A22631">
    <property type="entry name" value="A22631"/>
</dbReference>
<dbReference type="SMR" id="P04800"/>
<dbReference type="FunCoup" id="P04800">
    <property type="interactions" value="37"/>
</dbReference>
<dbReference type="STRING" id="10116.ENSRNOP00000068625"/>
<dbReference type="BindingDB" id="P04800"/>
<dbReference type="ChEMBL" id="CHEMBL3323"/>
<dbReference type="DrugBank" id="DB13746">
    <property type="generic name" value="Bioallethrin"/>
</dbReference>
<dbReference type="DrugBank" id="DB01645">
    <property type="generic name" value="Genistein"/>
</dbReference>
<dbReference type="DrugBank" id="DB00603">
    <property type="generic name" value="Medroxyprogesterone acetate"/>
</dbReference>
<dbReference type="DrugBank" id="DB08834">
    <property type="generic name" value="Tauroursodeoxycholic acid"/>
</dbReference>
<dbReference type="iPTMnet" id="P04800"/>
<dbReference type="PhosphoSitePlus" id="P04800"/>
<dbReference type="PaxDb" id="10116-ENSRNOP00000041138"/>
<dbReference type="AGR" id="RGD:628626"/>
<dbReference type="RGD" id="628626">
    <property type="gene designation" value="Cyp3a1"/>
</dbReference>
<dbReference type="eggNOG" id="KOG0158">
    <property type="taxonomic scope" value="Eukaryota"/>
</dbReference>
<dbReference type="InParanoid" id="P04800"/>
<dbReference type="PhylomeDB" id="P04800"/>
<dbReference type="BRENDA" id="1.14.14.1">
    <property type="organism ID" value="5301"/>
</dbReference>
<dbReference type="Reactome" id="R-RNO-211945">
    <property type="pathway name" value="Phase I - Functionalization of compounds"/>
</dbReference>
<dbReference type="Reactome" id="R-RNO-211958">
    <property type="pathway name" value="Miscellaneous substrates"/>
</dbReference>
<dbReference type="Reactome" id="R-RNO-211981">
    <property type="pathway name" value="Xenobiotics"/>
</dbReference>
<dbReference type="Reactome" id="R-RNO-5423646">
    <property type="pathway name" value="Aflatoxin activation and detoxification"/>
</dbReference>
<dbReference type="Reactome" id="R-RNO-9027307">
    <property type="pathway name" value="Biosynthesis of maresin-like SPMs"/>
</dbReference>
<dbReference type="Reactome" id="R-RNO-9749641">
    <property type="pathway name" value="Aspirin ADME"/>
</dbReference>
<dbReference type="Reactome" id="R-RNO-9754706">
    <property type="pathway name" value="Atorvastatin ADME"/>
</dbReference>
<dbReference type="Reactome" id="R-RNO-9757110">
    <property type="pathway name" value="Prednisone ADME"/>
</dbReference>
<dbReference type="SABIO-RK" id="P04800"/>
<dbReference type="PRO" id="PR:P04800"/>
<dbReference type="Proteomes" id="UP000002494">
    <property type="component" value="Unplaced"/>
</dbReference>
<dbReference type="GO" id="GO:0005789">
    <property type="term" value="C:endoplasmic reticulum membrane"/>
    <property type="evidence" value="ECO:0000314"/>
    <property type="project" value="RGD"/>
</dbReference>
<dbReference type="GO" id="GO:0032451">
    <property type="term" value="F:demethylase activity"/>
    <property type="evidence" value="ECO:0000314"/>
    <property type="project" value="RGD"/>
</dbReference>
<dbReference type="GO" id="GO:0020037">
    <property type="term" value="F:heme binding"/>
    <property type="evidence" value="ECO:0007669"/>
    <property type="project" value="InterPro"/>
</dbReference>
<dbReference type="GO" id="GO:0005506">
    <property type="term" value="F:iron ion binding"/>
    <property type="evidence" value="ECO:0007669"/>
    <property type="project" value="InterPro"/>
</dbReference>
<dbReference type="GO" id="GO:0016712">
    <property type="term" value="F:oxidoreductase activity, acting on paired donors, with incorporation or reduction of molecular oxygen, reduced flavin or flavoprotein as one donor, and incorporation of one atom of oxygen"/>
    <property type="evidence" value="ECO:0007669"/>
    <property type="project" value="UniProtKB-EC"/>
</dbReference>
<dbReference type="GO" id="GO:0050649">
    <property type="term" value="F:testosterone 6-beta-hydroxylase activity"/>
    <property type="evidence" value="ECO:0000314"/>
    <property type="project" value="RGD"/>
</dbReference>
<dbReference type="GO" id="GO:0070989">
    <property type="term" value="P:oxidative demethylation"/>
    <property type="evidence" value="ECO:0000314"/>
    <property type="project" value="RGD"/>
</dbReference>
<dbReference type="GO" id="GO:0046686">
    <property type="term" value="P:response to cadmium ion"/>
    <property type="evidence" value="ECO:0000270"/>
    <property type="project" value="RGD"/>
</dbReference>
<dbReference type="GO" id="GO:0071548">
    <property type="term" value="P:response to dexamethasone"/>
    <property type="evidence" value="ECO:0000270"/>
    <property type="project" value="RGD"/>
</dbReference>
<dbReference type="GO" id="GO:0033595">
    <property type="term" value="P:response to genistein"/>
    <property type="evidence" value="ECO:0000270"/>
    <property type="project" value="RGD"/>
</dbReference>
<dbReference type="GO" id="GO:0051384">
    <property type="term" value="P:response to glucocorticoid"/>
    <property type="evidence" value="ECO:0000270"/>
    <property type="project" value="RGD"/>
</dbReference>
<dbReference type="GO" id="GO:0010038">
    <property type="term" value="P:response to metal ion"/>
    <property type="evidence" value="ECO:0000270"/>
    <property type="project" value="RGD"/>
</dbReference>
<dbReference type="GO" id="GO:0007584">
    <property type="term" value="P:response to nutrient"/>
    <property type="evidence" value="ECO:0000270"/>
    <property type="project" value="RGD"/>
</dbReference>
<dbReference type="GO" id="GO:0009410">
    <property type="term" value="P:response to xenobiotic stimulus"/>
    <property type="evidence" value="ECO:0000270"/>
    <property type="project" value="RGD"/>
</dbReference>
<dbReference type="GO" id="GO:0008202">
    <property type="term" value="P:steroid metabolic process"/>
    <property type="evidence" value="ECO:0000318"/>
    <property type="project" value="GO_Central"/>
</dbReference>
<dbReference type="GO" id="GO:0006805">
    <property type="term" value="P:xenobiotic metabolic process"/>
    <property type="evidence" value="ECO:0000314"/>
    <property type="project" value="RGD"/>
</dbReference>
<dbReference type="CDD" id="cd20650">
    <property type="entry name" value="CYP3A"/>
    <property type="match status" value="1"/>
</dbReference>
<dbReference type="FunFam" id="1.10.630.10:FF:000096">
    <property type="entry name" value="Cytochrome P450 3A4"/>
    <property type="match status" value="1"/>
</dbReference>
<dbReference type="Gene3D" id="1.10.630.10">
    <property type="entry name" value="Cytochrome P450"/>
    <property type="match status" value="1"/>
</dbReference>
<dbReference type="InterPro" id="IPR001128">
    <property type="entry name" value="Cyt_P450"/>
</dbReference>
<dbReference type="InterPro" id="IPR017972">
    <property type="entry name" value="Cyt_P450_CS"/>
</dbReference>
<dbReference type="InterPro" id="IPR008072">
    <property type="entry name" value="Cyt_P450_E_CYP3A"/>
</dbReference>
<dbReference type="InterPro" id="IPR002402">
    <property type="entry name" value="Cyt_P450_E_grp-II"/>
</dbReference>
<dbReference type="InterPro" id="IPR036396">
    <property type="entry name" value="Cyt_P450_sf"/>
</dbReference>
<dbReference type="InterPro" id="IPR050705">
    <property type="entry name" value="Cytochrome_P450_3A"/>
</dbReference>
<dbReference type="PANTHER" id="PTHR24302:SF49">
    <property type="entry name" value="CYTOCHROME P450 3A-RELATED"/>
    <property type="match status" value="1"/>
</dbReference>
<dbReference type="PANTHER" id="PTHR24302">
    <property type="entry name" value="CYTOCHROME P450 FAMILY 3"/>
    <property type="match status" value="1"/>
</dbReference>
<dbReference type="Pfam" id="PF00067">
    <property type="entry name" value="p450"/>
    <property type="match status" value="1"/>
</dbReference>
<dbReference type="PRINTS" id="PR00464">
    <property type="entry name" value="EP450II"/>
</dbReference>
<dbReference type="PRINTS" id="PR01689">
    <property type="entry name" value="EP450IICYP3A"/>
</dbReference>
<dbReference type="PRINTS" id="PR00385">
    <property type="entry name" value="P450"/>
</dbReference>
<dbReference type="SUPFAM" id="SSF48264">
    <property type="entry name" value="Cytochrome P450"/>
    <property type="match status" value="1"/>
</dbReference>
<dbReference type="PROSITE" id="PS00086">
    <property type="entry name" value="CYTOCHROME_P450"/>
    <property type="match status" value="1"/>
</dbReference>
<sequence length="504" mass="57918">MDLLSALTLETWVLLAVVLVLLYGFGTRTHGLFKKQGIPGPKPLPFFGTVLNYYMGLWKFDVECHKKYGKIWGLFDGQMPLFAITDTEMIKNVLVKECFSVFTNRRDFGPVGIMGKAVSVAKDEEWKRYRALLSPTFTSGRLKEMFPIIEQYGDILVKYLKQEAETGKPVTMKKVFGAYSMDVITSTSFGVNVDSLNNPKDPFVEKTKKLLRFDFFDPLFLSVVLFPFLTPIYEMLNICMFPKDSIEFFKKFVYRMKETRLDSVQKHRVDFLQLMMNAHNDSKDKESHTALSDMEITAQSIIFIFAGYEPTSSTLSFVLHSLATHPDTQKKLQEEIDRALPNKAPPTYDTVMEMEYLDMVLNETLRLYPIGNRLERVCKKDVEINGVFMPKGSVVMIPSYALHRDPQHWPEPEEFRPERFSKENKGSIDPYVYLPFGNGPRNCIGMRFALMNMKLALTKVLQNFSFQPCKETQIPLKLSRQGLLQPTKPIILKVVPRDEIITGS</sequence>
<evidence type="ECO:0000250" key="1"/>
<evidence type="ECO:0000305" key="2"/>
<feature type="chain" id="PRO_0000051783" description="Cytochrome P450 3A1">
    <location>
        <begin position="1"/>
        <end position="504"/>
    </location>
</feature>
<feature type="binding site" description="axial binding residue">
    <location>
        <position position="443"/>
    </location>
    <ligand>
        <name>heme</name>
        <dbReference type="ChEBI" id="CHEBI:30413"/>
    </ligand>
    <ligandPart>
        <name>Fe</name>
        <dbReference type="ChEBI" id="CHEBI:18248"/>
    </ligandPart>
</feature>
<feature type="sequence variant" description="In strain: Wistar.">
    <original>T</original>
    <variation>A</variation>
    <location>
        <position position="207"/>
    </location>
</feature>
<feature type="sequence variant" description="In strain: Wistar.">
    <original>F</original>
    <variation>I</variation>
    <location>
        <position position="213"/>
    </location>
</feature>
<feature type="sequence variant" description="In strain: Wistar.">
    <original>I</original>
    <variation>V</variation>
    <location>
        <position position="232"/>
    </location>
</feature>
<reference key="1">
    <citation type="journal article" date="1985" name="J. Biol. Chem.">
        <title>Complete cDNA and protein sequence of a pregnenolone 16 alpha-carbonitrile-induced cytochrome P-450. A representative of a new gene family.</title>
        <authorList>
            <person name="Gonzalez F.J."/>
            <person name="Nebert D.W."/>
            <person name="Hardwick J.P."/>
            <person name="Kasper C.B."/>
        </authorList>
    </citation>
    <scope>NUCLEOTIDE SEQUENCE [MRNA]</scope>
</reference>
<reference key="2">
    <citation type="journal article" date="1992" name="Arch. Biochem. Biophys.">
        <title>Cloning and characterization of a novel CYP3A1 allelic variant: analysis of CYP3A1 and CYP3A2 sex-hormone-dependent expression reveals that the CYP3A2 gene is regulated by testosterone.</title>
        <authorList>
            <person name="Ribeiro V."/>
            <person name="Lechner M.C."/>
        </authorList>
    </citation>
    <scope>NUCLEOTIDE SEQUENCE [MRNA]</scope>
    <source>
        <strain>Wistar</strain>
        <tissue>Liver</tissue>
    </source>
</reference>
<reference key="3">
    <citation type="journal article" date="1990" name="J. Biochem.">
        <title>Purification and characterization of four catalytically active testosterone 6 beta-hydroxylase P-450s from rat liver microsomes: comparison of a novel form with three structurally and functionally related forms.</title>
        <authorList>
            <person name="Nagata K."/>
            <person name="Gonzalez F.J."/>
            <person name="Yamazoe Y."/>
            <person name="Kato R."/>
        </authorList>
    </citation>
    <scope>PROTEIN SEQUENCE OF 1-26</scope>
</reference>
<reference key="4">
    <citation type="journal article" date="1993" name="Arch. Biochem. Biophys.">
        <title>Regulation of two members of the steroid-inducible cytochrome P450 subfamily (3A) in rats.</title>
        <authorList>
            <person name="Cooper K.O."/>
            <person name="Reik L.M."/>
            <person name="Jayyosi Z."/>
            <person name="Bandiera S."/>
            <person name="Kelley M."/>
            <person name="Ryan D.E."/>
            <person name="Daniel R."/>
            <person name="McCluskey S.A."/>
            <person name="Levin W."/>
            <person name="Thomas P.E."/>
        </authorList>
    </citation>
    <scope>PROTEIN SEQUENCE OF 1-25</scope>
</reference>
<reference key="5">
    <citation type="journal article" date="1992" name="Proc. Natl. Acad. Sci. U.S.A.">
        <title>Paradoxical transcriptional activation of rat liver cytochrome P-450 3A1 by dexamethasone and the antiglucocorticoid pregnenolone 16 alpha-carbonitrile: analysis by transient transfection into primary monolayer cultures of adult rat hepatocytes.</title>
        <authorList>
            <person name="Burger H.J."/>
            <person name="Schuetz J.D."/>
            <person name="Schuetz E.G."/>
            <person name="Guzelian P.S."/>
        </authorList>
    </citation>
    <scope>NUCLEOTIDE SEQUENCE [GENOMIC DNA] OF 1-24</scope>
</reference>
<reference key="6">
    <citation type="journal article" date="1992" name="Arch. Biochem. Biophys.">
        <title>Effect of dexamethasone and phenobarbital on run-on transcription rate and CYP3A mRNA concentration in rat liver: changes during development.</title>
        <authorList>
            <person name="Telhada M.B."/>
            <person name="Pereira T.M."/>
            <person name="Lechner M.C."/>
        </authorList>
    </citation>
    <scope>NUCLEOTIDE SEQUENCE OF 1-24</scope>
    <source>
        <tissue>Liver</tissue>
    </source>
</reference>
<name>CP3A1_RAT</name>
<organism>
    <name type="scientific">Rattus norvegicus</name>
    <name type="common">Rat</name>
    <dbReference type="NCBI Taxonomy" id="10116"/>
    <lineage>
        <taxon>Eukaryota</taxon>
        <taxon>Metazoa</taxon>
        <taxon>Chordata</taxon>
        <taxon>Craniata</taxon>
        <taxon>Vertebrata</taxon>
        <taxon>Euteleostomi</taxon>
        <taxon>Mammalia</taxon>
        <taxon>Eutheria</taxon>
        <taxon>Euarchontoglires</taxon>
        <taxon>Glires</taxon>
        <taxon>Rodentia</taxon>
        <taxon>Myomorpha</taxon>
        <taxon>Muroidea</taxon>
        <taxon>Muridae</taxon>
        <taxon>Murinae</taxon>
        <taxon>Rattus</taxon>
    </lineage>
</organism>
<gene>
    <name type="primary">Cyp3a1</name>
    <name type="synonym">Cyp3a-1</name>
</gene>
<accession>P04800</accession>
<accession>Q64580</accession>
<comment type="function">
    <text>Cytochromes P450 are a group of heme-thiolate monooxygenases. In liver microsomes, this enzyme is involved in an NADPH-dependent electron transport pathway. It oxidizes a variety of structurally unrelated compounds, including steroids, fatty acids, and xenobiotics.</text>
</comment>
<comment type="catalytic activity">
    <reaction>
        <text>an organic molecule + reduced [NADPH--hemoprotein reductase] + O2 = an alcohol + oxidized [NADPH--hemoprotein reductase] + H2O + H(+)</text>
        <dbReference type="Rhea" id="RHEA:17149"/>
        <dbReference type="Rhea" id="RHEA-COMP:11964"/>
        <dbReference type="Rhea" id="RHEA-COMP:11965"/>
        <dbReference type="ChEBI" id="CHEBI:15377"/>
        <dbReference type="ChEBI" id="CHEBI:15378"/>
        <dbReference type="ChEBI" id="CHEBI:15379"/>
        <dbReference type="ChEBI" id="CHEBI:30879"/>
        <dbReference type="ChEBI" id="CHEBI:57618"/>
        <dbReference type="ChEBI" id="CHEBI:58210"/>
        <dbReference type="ChEBI" id="CHEBI:142491"/>
        <dbReference type="EC" id="1.14.14.1"/>
    </reaction>
</comment>
<comment type="cofactor">
    <cofactor evidence="1">
        <name>heme</name>
        <dbReference type="ChEBI" id="CHEBI:30413"/>
    </cofactor>
</comment>
<comment type="subcellular location">
    <subcellularLocation>
        <location>Endoplasmic reticulum membrane</location>
        <topology>Peripheral membrane protein</topology>
    </subcellularLocation>
    <subcellularLocation>
        <location>Microsome membrane</location>
        <topology>Peripheral membrane protein</topology>
    </subcellularLocation>
</comment>
<comment type="induction">
    <text>By pregnenolone 16-alpha-carbonitrile (PNCN).</text>
</comment>
<comment type="similarity">
    <text evidence="2">Belongs to the cytochrome P450 family.</text>
</comment>
<proteinExistence type="evidence at protein level"/>
<protein>
    <recommendedName>
        <fullName>Cytochrome P450 3A1</fullName>
        <ecNumber>1.14.14.1</ecNumber>
    </recommendedName>
    <alternativeName>
        <fullName>CYPIIIA1</fullName>
    </alternativeName>
    <alternativeName>
        <fullName>Cytochrome P450-PCN1</fullName>
    </alternativeName>
</protein>